<organism>
    <name type="scientific">Euplotes raikovi</name>
    <dbReference type="NCBI Taxonomy" id="5938"/>
    <lineage>
        <taxon>Eukaryota</taxon>
        <taxon>Sar</taxon>
        <taxon>Alveolata</taxon>
        <taxon>Ciliophora</taxon>
        <taxon>Intramacronucleata</taxon>
        <taxon>Spirotrichea</taxon>
        <taxon>Hypotrichia</taxon>
        <taxon>Euplotida</taxon>
        <taxon>Euplotidae</taxon>
        <taxon>Euplotes</taxon>
    </lineage>
</organism>
<accession>P26888</accession>
<keyword id="KW-0903">Direct protein sequencing</keyword>
<keyword id="KW-1015">Disulfide bond</keyword>
<keyword id="KW-0588">Pheromone</keyword>
<keyword id="KW-0964">Secreted</keyword>
<proteinExistence type="evidence at protein level"/>
<comment type="function">
    <text>Mating ciliate pheromones (or gamones) are diffusible extracellular communication signals that distinguish different intraspecific classes of cells commonly referred to as 'mating types'. They prepare the latter for conjugation by changing their cell surface properties.</text>
</comment>
<comment type="subunit">
    <text evidence="2">Homodimer.</text>
</comment>
<comment type="subcellular location">
    <subcellularLocation>
        <location>Secreted</location>
    </subcellularLocation>
</comment>
<name>MER20_EUPRA</name>
<sequence length="37" mass="4002">DICDDAVAQCSMTLCQLCYNTEICELSVIGSCQPPFS</sequence>
<reference key="1">
    <citation type="journal article" date="1992" name="Proc. Natl. Acad. Sci. U.S.A.">
        <title>Primary structure of Euplotes raikovi pheromones: comparison of five sequences of pheromones from cells with variable mating interactions.</title>
        <authorList>
            <person name="Raffioni S."/>
            <person name="Miceli C."/>
            <person name="Vallesi A."/>
            <person name="Chowdhury S.K."/>
            <person name="Chait B.T."/>
            <person name="Luporini P."/>
            <person name="Bradshaw R.A."/>
        </authorList>
    </citation>
    <scope>PROTEIN SEQUENCE</scope>
    <source>
        <strain>GA-4</strain>
    </source>
</reference>
<protein>
    <recommendedName>
        <fullName>Mating pheromone Er-20</fullName>
    </recommendedName>
    <alternativeName>
        <fullName>Euplomone R20</fullName>
    </alternativeName>
</protein>
<feature type="chain" id="PRO_0000186197" description="Mating pheromone Er-20">
    <location>
        <begin position="1"/>
        <end position="37" status="greater than"/>
    </location>
</feature>
<feature type="disulfide bond" evidence="1">
    <location>
        <begin position="3"/>
        <end position="18"/>
    </location>
</feature>
<feature type="disulfide bond" evidence="1">
    <location>
        <begin position="10"/>
        <end position="32"/>
    </location>
</feature>
<feature type="disulfide bond" evidence="1">
    <location>
        <begin position="15"/>
        <end position="24"/>
    </location>
</feature>
<feature type="non-terminal residue">
    <location>
        <position position="37"/>
    </location>
</feature>
<dbReference type="PIR" id="C41933">
    <property type="entry name" value="C41933"/>
</dbReference>
<dbReference type="SMR" id="P26888"/>
<dbReference type="GO" id="GO:0005576">
    <property type="term" value="C:extracellular region"/>
    <property type="evidence" value="ECO:0007669"/>
    <property type="project" value="UniProtKB-SubCell"/>
</dbReference>
<dbReference type="GO" id="GO:0005186">
    <property type="term" value="F:pheromone activity"/>
    <property type="evidence" value="ECO:0007669"/>
    <property type="project" value="UniProtKB-KW"/>
</dbReference>
<dbReference type="InterPro" id="IPR009064">
    <property type="entry name" value="Pheromone_protoz"/>
</dbReference>
<dbReference type="InterPro" id="IPR036245">
    <property type="entry name" value="Pheromone_protoz_sf"/>
</dbReference>
<dbReference type="Pfam" id="PF06360">
    <property type="entry name" value="E_raikovi_mat"/>
    <property type="match status" value="1"/>
</dbReference>
<dbReference type="SUPFAM" id="SSF47014">
    <property type="entry name" value="Protozoan pheromone proteins"/>
    <property type="match status" value="1"/>
</dbReference>
<gene>
    <name type="primary">MAT20</name>
</gene>
<evidence type="ECO:0000250" key="1"/>
<evidence type="ECO:0000305" key="2"/>